<dbReference type="EC" id="1.4.1.3" evidence="2"/>
<dbReference type="EMBL" id="CM000128">
    <property type="protein sequence ID" value="EAY92161.1"/>
    <property type="status" value="ALT_SEQ"/>
    <property type="molecule type" value="Genomic_DNA"/>
</dbReference>
<dbReference type="SMR" id="A2XMV1"/>
<dbReference type="STRING" id="39946.A2XMV1"/>
<dbReference type="HOGENOM" id="CLU_025763_1_2_1"/>
<dbReference type="Proteomes" id="UP000007015">
    <property type="component" value="Chromosome 3"/>
</dbReference>
<dbReference type="GO" id="GO:0005739">
    <property type="term" value="C:mitochondrion"/>
    <property type="evidence" value="ECO:0007669"/>
    <property type="project" value="UniProtKB-SubCell"/>
</dbReference>
<dbReference type="GO" id="GO:0004352">
    <property type="term" value="F:glutamate dehydrogenase (NAD+) activity"/>
    <property type="evidence" value="ECO:0007669"/>
    <property type="project" value="RHEA"/>
</dbReference>
<dbReference type="GO" id="GO:0004354">
    <property type="term" value="F:glutamate dehydrogenase (NADP+) activity"/>
    <property type="evidence" value="ECO:0007669"/>
    <property type="project" value="RHEA"/>
</dbReference>
<dbReference type="GO" id="GO:0006538">
    <property type="term" value="P:glutamate catabolic process"/>
    <property type="evidence" value="ECO:0007669"/>
    <property type="project" value="TreeGrafter"/>
</dbReference>
<dbReference type="CDD" id="cd01076">
    <property type="entry name" value="NAD_bind_1_Glu_DH"/>
    <property type="match status" value="1"/>
</dbReference>
<dbReference type="FunFam" id="3.40.50.10860:FF:000003">
    <property type="entry name" value="Glutamate dehydrogenase"/>
    <property type="match status" value="1"/>
</dbReference>
<dbReference type="FunFam" id="3.40.50.720:FF:000212">
    <property type="entry name" value="Glutamate dehydrogenase"/>
    <property type="match status" value="1"/>
</dbReference>
<dbReference type="Gene3D" id="3.40.50.10860">
    <property type="entry name" value="Leucine Dehydrogenase, chain A, domain 1"/>
    <property type="match status" value="1"/>
</dbReference>
<dbReference type="Gene3D" id="3.40.50.720">
    <property type="entry name" value="NAD(P)-binding Rossmann-like Domain"/>
    <property type="match status" value="1"/>
</dbReference>
<dbReference type="InterPro" id="IPR046346">
    <property type="entry name" value="Aminoacid_DH-like_N_sf"/>
</dbReference>
<dbReference type="InterPro" id="IPR006095">
    <property type="entry name" value="Glu/Leu/Phe/Val/Trp_DH"/>
</dbReference>
<dbReference type="InterPro" id="IPR006096">
    <property type="entry name" value="Glu/Leu/Phe/Val/Trp_DH_C"/>
</dbReference>
<dbReference type="InterPro" id="IPR006097">
    <property type="entry name" value="Glu/Leu/Phe/Val/Trp_DH_dimer"/>
</dbReference>
<dbReference type="InterPro" id="IPR033524">
    <property type="entry name" value="Glu/Leu/Phe/Val_DH_AS"/>
</dbReference>
<dbReference type="InterPro" id="IPR014362">
    <property type="entry name" value="Glu_DH"/>
</dbReference>
<dbReference type="InterPro" id="IPR036291">
    <property type="entry name" value="NAD(P)-bd_dom_sf"/>
</dbReference>
<dbReference type="InterPro" id="IPR033922">
    <property type="entry name" value="NAD_bind_Glu_DH"/>
</dbReference>
<dbReference type="PANTHER" id="PTHR11606">
    <property type="entry name" value="GLUTAMATE DEHYDROGENASE"/>
    <property type="match status" value="1"/>
</dbReference>
<dbReference type="PANTHER" id="PTHR11606:SF29">
    <property type="entry name" value="GLUTAMATE DEHYDROGENASE 3-RELATED"/>
    <property type="match status" value="1"/>
</dbReference>
<dbReference type="Pfam" id="PF00208">
    <property type="entry name" value="ELFV_dehydrog"/>
    <property type="match status" value="1"/>
</dbReference>
<dbReference type="Pfam" id="PF02812">
    <property type="entry name" value="ELFV_dehydrog_N"/>
    <property type="match status" value="1"/>
</dbReference>
<dbReference type="PIRSF" id="PIRSF000185">
    <property type="entry name" value="Glu_DH"/>
    <property type="match status" value="1"/>
</dbReference>
<dbReference type="PRINTS" id="PR00082">
    <property type="entry name" value="GLFDHDRGNASE"/>
</dbReference>
<dbReference type="SMART" id="SM00839">
    <property type="entry name" value="ELFV_dehydrog"/>
    <property type="match status" value="1"/>
</dbReference>
<dbReference type="SUPFAM" id="SSF53223">
    <property type="entry name" value="Aminoacid dehydrogenase-like, N-terminal domain"/>
    <property type="match status" value="1"/>
</dbReference>
<dbReference type="SUPFAM" id="SSF51735">
    <property type="entry name" value="NAD(P)-binding Rossmann-fold domains"/>
    <property type="match status" value="1"/>
</dbReference>
<dbReference type="PROSITE" id="PS00074">
    <property type="entry name" value="GLFV_DEHYDROGENASE"/>
    <property type="match status" value="1"/>
</dbReference>
<gene>
    <name type="primary">GDH1</name>
    <name evidence="4" type="ORF">OsI_13874</name>
</gene>
<proteinExistence type="inferred from homology"/>
<accession>A2XMV1</accession>
<evidence type="ECO:0000255" key="1"/>
<evidence type="ECO:0000255" key="2">
    <source>
        <dbReference type="PROSITE-ProRule" id="PRU10011"/>
    </source>
</evidence>
<evidence type="ECO:0000305" key="3"/>
<evidence type="ECO:0000312" key="4">
    <source>
        <dbReference type="EMBL" id="EAY92161.1"/>
    </source>
</evidence>
<sequence>MNALAATSRNFKQAAKLLGLDSKLEKSLLIPFREIKVECTIPKDDGTLASYVGFRVQHDNARGPMKGGIRYHHEVDPDEVNALAQLMTWKTAVANIPYGGAKGGIGCSPGDLSISELERLTRVFTQKIHDLIGIHTDVPAPDMGTNSQTMAWILDEYSKFHGYSPAVVTGKPVDLGGSLGRDAATGRGVLFATEALLAEHGKGIAGQRFVIQGFGNVGSWAAQLISEAGGKVIAISDVTGAVKNSNGLDIAKLMKHSSENRGIKGFDGGDAIDPRSLLTEECDVLIPAALGGVINKDNANEIKAKYIIEAANHPTDPEADEILSKKGVLILPDILANSGGVTVSYFEWVQNIQGFMWDEEKVNNELKTYMTRGFRDVKEMCRSHHCDLRMGAFTLGVNRVARATVLRGWEA</sequence>
<organism>
    <name type="scientific">Oryza sativa subsp. indica</name>
    <name type="common">Rice</name>
    <dbReference type="NCBI Taxonomy" id="39946"/>
    <lineage>
        <taxon>Eukaryota</taxon>
        <taxon>Viridiplantae</taxon>
        <taxon>Streptophyta</taxon>
        <taxon>Embryophyta</taxon>
        <taxon>Tracheophyta</taxon>
        <taxon>Spermatophyta</taxon>
        <taxon>Magnoliopsida</taxon>
        <taxon>Liliopsida</taxon>
        <taxon>Poales</taxon>
        <taxon>Poaceae</taxon>
        <taxon>BOP clade</taxon>
        <taxon>Oryzoideae</taxon>
        <taxon>Oryzeae</taxon>
        <taxon>Oryzinae</taxon>
        <taxon>Oryza</taxon>
        <taxon>Oryza sativa</taxon>
    </lineage>
</organism>
<keyword id="KW-0496">Mitochondrion</keyword>
<keyword id="KW-0520">NAD</keyword>
<keyword id="KW-0521">NADP</keyword>
<keyword id="KW-0560">Oxidoreductase</keyword>
<keyword id="KW-1185">Reference proteome</keyword>
<keyword id="KW-0809">Transit peptide</keyword>
<name>DHE1_ORYSI</name>
<reference key="1">
    <citation type="journal article" date="2005" name="PLoS Biol.">
        <title>The genomes of Oryza sativa: a history of duplications.</title>
        <authorList>
            <person name="Yu J."/>
            <person name="Wang J."/>
            <person name="Lin W."/>
            <person name="Li S."/>
            <person name="Li H."/>
            <person name="Zhou J."/>
            <person name="Ni P."/>
            <person name="Dong W."/>
            <person name="Hu S."/>
            <person name="Zeng C."/>
            <person name="Zhang J."/>
            <person name="Zhang Y."/>
            <person name="Li R."/>
            <person name="Xu Z."/>
            <person name="Li S."/>
            <person name="Li X."/>
            <person name="Zheng H."/>
            <person name="Cong L."/>
            <person name="Lin L."/>
            <person name="Yin J."/>
            <person name="Geng J."/>
            <person name="Li G."/>
            <person name="Shi J."/>
            <person name="Liu J."/>
            <person name="Lv H."/>
            <person name="Li J."/>
            <person name="Wang J."/>
            <person name="Deng Y."/>
            <person name="Ran L."/>
            <person name="Shi X."/>
            <person name="Wang X."/>
            <person name="Wu Q."/>
            <person name="Li C."/>
            <person name="Ren X."/>
            <person name="Wang J."/>
            <person name="Wang X."/>
            <person name="Li D."/>
            <person name="Liu D."/>
            <person name="Zhang X."/>
            <person name="Ji Z."/>
            <person name="Zhao W."/>
            <person name="Sun Y."/>
            <person name="Zhang Z."/>
            <person name="Bao J."/>
            <person name="Han Y."/>
            <person name="Dong L."/>
            <person name="Ji J."/>
            <person name="Chen P."/>
            <person name="Wu S."/>
            <person name="Liu J."/>
            <person name="Xiao Y."/>
            <person name="Bu D."/>
            <person name="Tan J."/>
            <person name="Yang L."/>
            <person name="Ye C."/>
            <person name="Zhang J."/>
            <person name="Xu J."/>
            <person name="Zhou Y."/>
            <person name="Yu Y."/>
            <person name="Zhang B."/>
            <person name="Zhuang S."/>
            <person name="Wei H."/>
            <person name="Liu B."/>
            <person name="Lei M."/>
            <person name="Yu H."/>
            <person name="Li Y."/>
            <person name="Xu H."/>
            <person name="Wei S."/>
            <person name="He X."/>
            <person name="Fang L."/>
            <person name="Zhang Z."/>
            <person name="Zhang Y."/>
            <person name="Huang X."/>
            <person name="Su Z."/>
            <person name="Tong W."/>
            <person name="Li J."/>
            <person name="Tong Z."/>
            <person name="Li S."/>
            <person name="Ye J."/>
            <person name="Wang L."/>
            <person name="Fang L."/>
            <person name="Lei T."/>
            <person name="Chen C.-S."/>
            <person name="Chen H.-C."/>
            <person name="Xu Z."/>
            <person name="Li H."/>
            <person name="Huang H."/>
            <person name="Zhang F."/>
            <person name="Xu H."/>
            <person name="Li N."/>
            <person name="Zhao C."/>
            <person name="Li S."/>
            <person name="Dong L."/>
            <person name="Huang Y."/>
            <person name="Li L."/>
            <person name="Xi Y."/>
            <person name="Qi Q."/>
            <person name="Li W."/>
            <person name="Zhang B."/>
            <person name="Hu W."/>
            <person name="Zhang Y."/>
            <person name="Tian X."/>
            <person name="Jiao Y."/>
            <person name="Liang X."/>
            <person name="Jin J."/>
            <person name="Gao L."/>
            <person name="Zheng W."/>
            <person name="Hao B."/>
            <person name="Liu S.-M."/>
            <person name="Wang W."/>
            <person name="Yuan L."/>
            <person name="Cao M."/>
            <person name="McDermott J."/>
            <person name="Samudrala R."/>
            <person name="Wang J."/>
            <person name="Wong G.K.-S."/>
            <person name="Yang H."/>
        </authorList>
    </citation>
    <scope>NUCLEOTIDE SEQUENCE [LARGE SCALE GENOMIC DNA]</scope>
    <source>
        <strain>cv. 93-11</strain>
    </source>
</reference>
<feature type="transit peptide" description="Mitochondrion" evidence="1">
    <location>
        <begin position="1"/>
        <end position="18"/>
    </location>
</feature>
<feature type="chain" id="PRO_0000437578" description="Glutamate dehydrogenase 1, mitochondrial">
    <location>
        <begin position="19"/>
        <end position="411"/>
    </location>
</feature>
<feature type="active site" evidence="2">
    <location>
        <position position="102"/>
    </location>
</feature>
<comment type="catalytic activity">
    <reaction evidence="2">
        <text>L-glutamate + NAD(+) + H2O = 2-oxoglutarate + NH4(+) + NADH + H(+)</text>
        <dbReference type="Rhea" id="RHEA:15133"/>
        <dbReference type="ChEBI" id="CHEBI:15377"/>
        <dbReference type="ChEBI" id="CHEBI:15378"/>
        <dbReference type="ChEBI" id="CHEBI:16810"/>
        <dbReference type="ChEBI" id="CHEBI:28938"/>
        <dbReference type="ChEBI" id="CHEBI:29985"/>
        <dbReference type="ChEBI" id="CHEBI:57540"/>
        <dbReference type="ChEBI" id="CHEBI:57945"/>
        <dbReference type="EC" id="1.4.1.3"/>
    </reaction>
</comment>
<comment type="catalytic activity">
    <reaction evidence="2">
        <text>L-glutamate + NADP(+) + H2O = 2-oxoglutarate + NH4(+) + NADPH + H(+)</text>
        <dbReference type="Rhea" id="RHEA:11612"/>
        <dbReference type="ChEBI" id="CHEBI:15377"/>
        <dbReference type="ChEBI" id="CHEBI:15378"/>
        <dbReference type="ChEBI" id="CHEBI:16810"/>
        <dbReference type="ChEBI" id="CHEBI:28938"/>
        <dbReference type="ChEBI" id="CHEBI:29985"/>
        <dbReference type="ChEBI" id="CHEBI:57783"/>
        <dbReference type="ChEBI" id="CHEBI:58349"/>
        <dbReference type="EC" id="1.4.1.3"/>
    </reaction>
</comment>
<comment type="subcellular location">
    <subcellularLocation>
        <location evidence="1">Mitochondrion</location>
    </subcellularLocation>
</comment>
<comment type="similarity">
    <text evidence="3">Belongs to the Glu/Leu/Phe/Val dehydrogenases family.</text>
</comment>
<comment type="sequence caution" evidence="3">
    <conflict type="erroneous gene model prediction">
        <sequence resource="EMBL-CDS" id="EAY92161"/>
    </conflict>
</comment>
<protein>
    <recommendedName>
        <fullName evidence="3">Glutamate dehydrogenase 1, mitochondrial</fullName>
        <shortName>OsGDH1</shortName>
        <ecNumber evidence="2">1.4.1.3</ecNumber>
    </recommendedName>
</protein>